<gene>
    <name type="ordered locus">At2g17036</name>
    <name type="ORF">F6P23.19</name>
</gene>
<proteinExistence type="evidence at transcript level"/>
<accession>Q6DR20</accession>
<accession>F4IME7</accession>
<accession>Q7XJL8</accession>
<accession>Q84X31</accession>
<sequence>MMDWATLPKDLLDLISKCLESSFDLIQFRSVCSSWRSAAGPKRLLWAHNLPFFPSDDKPFLSNVILRVAHQSILLIKPNEPQCEADLFGWIVKVWDNIYVSRKMTLLKPLSSSRNYFPQHLPRIFDMSKFTVRELCREVKLYHPDYYCVPGHTALELELGKTVVKYLNDDKFVLLTILEYGKLAVFRSWDREWTVINDYIPSRCQDLIMFDGRFFAIDYNGRTVVVDYSSFKLTLAANPLIGGGDKKFLIESCGEMFLVDIEFCLNEKPEFTGGFYSYFNETTVSYKFKFFKLVEREKRWVEVEDLGDKMFFLGDDSTFSASTADIIPRCVGTGSFVFFYTHEESLVVMDDRNLGVFDFRSGKTELVNKLPEYAKLFWPPPPWITTSHESVENYTGETSSQSQS</sequence>
<keyword id="KW-1185">Reference proteome</keyword>
<name>FB110_ARATH</name>
<organism>
    <name type="scientific">Arabidopsis thaliana</name>
    <name type="common">Mouse-ear cress</name>
    <dbReference type="NCBI Taxonomy" id="3702"/>
    <lineage>
        <taxon>Eukaryota</taxon>
        <taxon>Viridiplantae</taxon>
        <taxon>Streptophyta</taxon>
        <taxon>Embryophyta</taxon>
        <taxon>Tracheophyta</taxon>
        <taxon>Spermatophyta</taxon>
        <taxon>Magnoliopsida</taxon>
        <taxon>eudicotyledons</taxon>
        <taxon>Gunneridae</taxon>
        <taxon>Pentapetalae</taxon>
        <taxon>rosids</taxon>
        <taxon>malvids</taxon>
        <taxon>Brassicales</taxon>
        <taxon>Brassicaceae</taxon>
        <taxon>Camelineae</taxon>
        <taxon>Arabidopsis</taxon>
    </lineage>
</organism>
<dbReference type="EMBL" id="CP002685">
    <property type="protein sequence ID" value="AEC06577.2"/>
    <property type="molecule type" value="Genomic_DNA"/>
</dbReference>
<dbReference type="EMBL" id="AY219075">
    <property type="protein sequence ID" value="AAO37162.1"/>
    <property type="molecule type" value="mRNA"/>
</dbReference>
<dbReference type="EMBL" id="AY649295">
    <property type="protein sequence ID" value="AAT69212.1"/>
    <property type="molecule type" value="mRNA"/>
</dbReference>
<dbReference type="PIR" id="C84547">
    <property type="entry name" value="C84547"/>
</dbReference>
<dbReference type="RefSeq" id="NP_001318237.1">
    <property type="nucleotide sequence ID" value="NM_001335533.1"/>
</dbReference>
<dbReference type="FunCoup" id="Q6DR20">
    <property type="interactions" value="176"/>
</dbReference>
<dbReference type="iPTMnet" id="Q6DR20"/>
<dbReference type="PaxDb" id="3702-AT2G17036.1"/>
<dbReference type="ProteomicsDB" id="222542"/>
<dbReference type="EnsemblPlants" id="AT2G17036.1">
    <property type="protein sequence ID" value="AT2G17036.1"/>
    <property type="gene ID" value="AT2G17036"/>
</dbReference>
<dbReference type="GeneID" id="816208"/>
<dbReference type="Gramene" id="AT2G17036.1">
    <property type="protein sequence ID" value="AT2G17036.1"/>
    <property type="gene ID" value="AT2G17036"/>
</dbReference>
<dbReference type="KEGG" id="ath:AT2G17036"/>
<dbReference type="Araport" id="AT2G17036"/>
<dbReference type="TAIR" id="AT2G17036">
    <property type="gene designation" value="ATFDA12"/>
</dbReference>
<dbReference type="eggNOG" id="ENOG502QW71">
    <property type="taxonomic scope" value="Eukaryota"/>
</dbReference>
<dbReference type="HOGENOM" id="CLU_019286_1_0_1"/>
<dbReference type="InParanoid" id="Q6DR20"/>
<dbReference type="OMA" id="DKQWVEA"/>
<dbReference type="PhylomeDB" id="Q6DR20"/>
<dbReference type="PRO" id="PR:Q6DR20"/>
<dbReference type="Proteomes" id="UP000006548">
    <property type="component" value="Chromosome 2"/>
</dbReference>
<dbReference type="ExpressionAtlas" id="Q6DR20">
    <property type="expression patterns" value="baseline and differential"/>
</dbReference>
<dbReference type="Gene3D" id="1.20.1280.50">
    <property type="match status" value="1"/>
</dbReference>
<dbReference type="InterPro" id="IPR001810">
    <property type="entry name" value="F-box_dom"/>
</dbReference>
<dbReference type="InterPro" id="IPR005174">
    <property type="entry name" value="KIB1-4_b-propeller"/>
</dbReference>
<dbReference type="InterPro" id="IPR051304">
    <property type="entry name" value="SCF_F-box_domain"/>
</dbReference>
<dbReference type="PANTHER" id="PTHR47123">
    <property type="entry name" value="F-BOX PROTEIN SKIP23"/>
    <property type="match status" value="1"/>
</dbReference>
<dbReference type="PANTHER" id="PTHR47123:SF15">
    <property type="entry name" value="F-BOX PROTEIN SKIP23"/>
    <property type="match status" value="1"/>
</dbReference>
<dbReference type="Pfam" id="PF03478">
    <property type="entry name" value="Beta-prop_KIB1-4"/>
    <property type="match status" value="1"/>
</dbReference>
<dbReference type="SMART" id="SM00256">
    <property type="entry name" value="FBOX"/>
    <property type="match status" value="1"/>
</dbReference>
<feature type="chain" id="PRO_0000274950" description="F-box protein At2g17036">
    <location>
        <begin position="1"/>
        <end position="404"/>
    </location>
</feature>
<feature type="domain" description="F-box">
    <location>
        <begin position="2"/>
        <end position="50"/>
    </location>
</feature>
<protein>
    <recommendedName>
        <fullName>F-box protein At2g17036</fullName>
    </recommendedName>
</protein>
<reference key="1">
    <citation type="journal article" date="1999" name="Nature">
        <title>Sequence and analysis of chromosome 2 of the plant Arabidopsis thaliana.</title>
        <authorList>
            <person name="Lin X."/>
            <person name="Kaul S."/>
            <person name="Rounsley S.D."/>
            <person name="Shea T.P."/>
            <person name="Benito M.-I."/>
            <person name="Town C.D."/>
            <person name="Fujii C.Y."/>
            <person name="Mason T.M."/>
            <person name="Bowman C.L."/>
            <person name="Barnstead M.E."/>
            <person name="Feldblyum T.V."/>
            <person name="Buell C.R."/>
            <person name="Ketchum K.A."/>
            <person name="Lee J.J."/>
            <person name="Ronning C.M."/>
            <person name="Koo H.L."/>
            <person name="Moffat K.S."/>
            <person name="Cronin L.A."/>
            <person name="Shen M."/>
            <person name="Pai G."/>
            <person name="Van Aken S."/>
            <person name="Umayam L."/>
            <person name="Tallon L.J."/>
            <person name="Gill J.E."/>
            <person name="Adams M.D."/>
            <person name="Carrera A.J."/>
            <person name="Creasy T.H."/>
            <person name="Goodman H.M."/>
            <person name="Somerville C.R."/>
            <person name="Copenhaver G.P."/>
            <person name="Preuss D."/>
            <person name="Nierman W.C."/>
            <person name="White O."/>
            <person name="Eisen J.A."/>
            <person name="Salzberg S.L."/>
            <person name="Fraser C.M."/>
            <person name="Venter J.C."/>
        </authorList>
    </citation>
    <scope>NUCLEOTIDE SEQUENCE [LARGE SCALE GENOMIC DNA]</scope>
    <source>
        <strain>cv. Columbia</strain>
    </source>
</reference>
<reference key="2">
    <citation type="journal article" date="2017" name="Plant J.">
        <title>Araport11: a complete reannotation of the Arabidopsis thaliana reference genome.</title>
        <authorList>
            <person name="Cheng C.Y."/>
            <person name="Krishnakumar V."/>
            <person name="Chan A.P."/>
            <person name="Thibaud-Nissen F."/>
            <person name="Schobel S."/>
            <person name="Town C.D."/>
        </authorList>
    </citation>
    <scope>GENOME REANNOTATION</scope>
    <source>
        <strain>cv. Columbia</strain>
    </source>
</reference>
<reference key="3">
    <citation type="journal article" date="2005" name="Plant Physiol.">
        <title>Analysis of the cDNAs of hypothetical genes on Arabidopsis chromosome 2 reveals numerous transcript variants.</title>
        <authorList>
            <person name="Xiao Y.-L."/>
            <person name="Smith S.R."/>
            <person name="Ishmael N."/>
            <person name="Redman J.C."/>
            <person name="Kumar N."/>
            <person name="Monaghan E.L."/>
            <person name="Ayele M."/>
            <person name="Haas B.J."/>
            <person name="Wu H.C."/>
            <person name="Town C.D."/>
        </authorList>
    </citation>
    <scope>NUCLEOTIDE SEQUENCE [LARGE SCALE MRNA]</scope>
    <source>
        <strain>cv. Columbia</strain>
    </source>
</reference>
<reference key="4">
    <citation type="submission" date="2004-06" db="EMBL/GenBank/DDBJ databases">
        <title>Cloning and sequencing of cDNAs for hypothetical genes from chromosome 2 of Arabidopsis.</title>
        <authorList>
            <person name="Underwood B.A."/>
            <person name="Xiao Y.-L."/>
            <person name="Moskal W.A. Jr."/>
            <person name="Monaghan E.L."/>
            <person name="Wang W."/>
            <person name="Redman J.C."/>
            <person name="Wu H.C."/>
            <person name="Utterback T."/>
            <person name="Town C.D."/>
        </authorList>
    </citation>
    <scope>NUCLEOTIDE SEQUENCE [LARGE SCALE MRNA]</scope>
    <source>
        <strain>cv. Columbia</strain>
    </source>
</reference>